<proteinExistence type="evidence at transcript level"/>
<accession>Q08C84</accession>
<accession>A5XCC8</accession>
<gene>
    <name type="primary">smyd4</name>
</gene>
<name>SMYD4_DANRE</name>
<protein>
    <recommendedName>
        <fullName>Protein-lysine N-methyltransferase SMYD4</fullName>
        <ecNumber evidence="3">2.1.1.-</ecNumber>
    </recommendedName>
    <alternativeName>
        <fullName>SET and MYND domain-containing protein 4</fullName>
    </alternativeName>
</protein>
<sequence length="753" mass="83677">MDLPCQDWVCHVEQKWAELRSEETERFSLLTDIDAIFNYGLSLICPEDLNILSRISEKFSVKKSPETASEFRQQGNLSFKVKDYPAAVLHYSKGVCHADKNTDELSLCYANRSAALFYQGLYQACLEDIRRSLEAGYPSHLQDKLQTRQTACQNQLRKAEKPNIPHTDHQLSPCQKTVNSTGHLSDGVSVYFSSDKGRHMLVMENKPAGEVVLEDEAYCSVLIPANIFNTGTNKAVETFGTEDRHCHHCLSQSLSFVPCPKCSYARYCGESCQKDAWDQWHQWECPVGADLLAIGVLGHLALRVVLKAGQTEVQMGIKNTKDHVTTYKNDSPVQLSLGGDCGKSLDHTDCFHGSSYMGIYSLLPHVAQHSPASRFLMAITMAVIYGKLQGGPPPNKWMSFKDEGVKASWQPEMSMLGATALRHMMQLRCNAQAITAVRVKEESGMAVQSSSEIRIATAIFPVLSLLNHSCSPNTSISFTTGFQPDPHNQLGCSEGHFDHPKGSRSGVTVTVRASKDLTAGQEILHCYGPHRSRMEVKERQRLLLEQYFFQCVCQACQRDLSEGSPNAKEHTAPGMKCVKCGKPLQSHTDGYTCSWSSCGHQISSADVQNRLQGFQLLLDEAVHLMEQDRLNEALHILQSAFSQANSILTETHPFQGELADALARLYASTGEWSLAASHLKRSLVAIQAQFGEDSIELGRQLFKLAQLHFNGRDGVASLSVIPRARRLLSLHCSPRCEELQELSEMEHCLQGLL</sequence>
<dbReference type="EC" id="2.1.1.-" evidence="3"/>
<dbReference type="EMBL" id="CABZ01017683">
    <property type="status" value="NOT_ANNOTATED_CDS"/>
    <property type="molecule type" value="Genomic_DNA"/>
</dbReference>
<dbReference type="EMBL" id="CABZ01017684">
    <property type="status" value="NOT_ANNOTATED_CDS"/>
    <property type="molecule type" value="Genomic_DNA"/>
</dbReference>
<dbReference type="EMBL" id="BC124341">
    <property type="protein sequence ID" value="AAI24342.1"/>
    <property type="molecule type" value="mRNA"/>
</dbReference>
<dbReference type="EMBL" id="DQ851818">
    <property type="protein sequence ID" value="ABI34489.1"/>
    <property type="molecule type" value="mRNA"/>
</dbReference>
<dbReference type="RefSeq" id="NP_001070062.1">
    <property type="nucleotide sequence ID" value="NM_001076594.1"/>
</dbReference>
<dbReference type="SMR" id="Q08C84"/>
<dbReference type="FunCoup" id="Q08C84">
    <property type="interactions" value="1370"/>
</dbReference>
<dbReference type="STRING" id="7955.ENSDARP00000080925"/>
<dbReference type="PaxDb" id="7955-ENSDARP00000080925"/>
<dbReference type="Ensembl" id="ENSDART00000086490">
    <property type="protein sequence ID" value="ENSDARP00000080925"/>
    <property type="gene ID" value="ENSDARG00000060983"/>
</dbReference>
<dbReference type="GeneID" id="767654"/>
<dbReference type="KEGG" id="dre:767654"/>
<dbReference type="AGR" id="ZFIN:ZDB-GENE-060929-248"/>
<dbReference type="CTD" id="114826"/>
<dbReference type="ZFIN" id="ZDB-GENE-060929-248">
    <property type="gene designation" value="smyd4"/>
</dbReference>
<dbReference type="eggNOG" id="KOG2084">
    <property type="taxonomic scope" value="Eukaryota"/>
</dbReference>
<dbReference type="HOGENOM" id="CLU_021727_0_0_1"/>
<dbReference type="InParanoid" id="Q08C84"/>
<dbReference type="OMA" id="FDCTCPA"/>
<dbReference type="OrthoDB" id="62495at2759"/>
<dbReference type="PhylomeDB" id="Q08C84"/>
<dbReference type="TreeFam" id="TF106441"/>
<dbReference type="PRO" id="PR:Q08C84"/>
<dbReference type="Proteomes" id="UP000000437">
    <property type="component" value="Chromosome 10"/>
</dbReference>
<dbReference type="Bgee" id="ENSDARG00000060983">
    <property type="expression patterns" value="Expressed in presomitic mesoderm and 28 other cell types or tissues"/>
</dbReference>
<dbReference type="GO" id="GO:0005737">
    <property type="term" value="C:cytoplasm"/>
    <property type="evidence" value="ECO:0000250"/>
    <property type="project" value="UniProtKB"/>
</dbReference>
<dbReference type="GO" id="GO:0005634">
    <property type="term" value="C:nucleus"/>
    <property type="evidence" value="ECO:0000250"/>
    <property type="project" value="UniProtKB"/>
</dbReference>
<dbReference type="GO" id="GO:0004407">
    <property type="term" value="F:histone deacetylase activity"/>
    <property type="evidence" value="ECO:0000315"/>
    <property type="project" value="ZFIN"/>
</dbReference>
<dbReference type="GO" id="GO:0042826">
    <property type="term" value="F:histone deacetylase binding"/>
    <property type="evidence" value="ECO:0000318"/>
    <property type="project" value="GO_Central"/>
</dbReference>
<dbReference type="GO" id="GO:0042800">
    <property type="term" value="F:histone H3K4 methyltransferase activity"/>
    <property type="evidence" value="ECO:0000315"/>
    <property type="project" value="FlyBase"/>
</dbReference>
<dbReference type="GO" id="GO:0008270">
    <property type="term" value="F:zinc ion binding"/>
    <property type="evidence" value="ECO:0007669"/>
    <property type="project" value="UniProtKB-KW"/>
</dbReference>
<dbReference type="GO" id="GO:0061371">
    <property type="term" value="P:determination of heart left/right asymmetry"/>
    <property type="evidence" value="ECO:0000315"/>
    <property type="project" value="ZFIN"/>
</dbReference>
<dbReference type="GO" id="GO:0007507">
    <property type="term" value="P:heart development"/>
    <property type="evidence" value="ECO:0000318"/>
    <property type="project" value="GO_Central"/>
</dbReference>
<dbReference type="GO" id="GO:0001947">
    <property type="term" value="P:heart looping"/>
    <property type="evidence" value="ECO:0000315"/>
    <property type="project" value="ZFIN"/>
</dbReference>
<dbReference type="GO" id="GO:0003007">
    <property type="term" value="P:heart morphogenesis"/>
    <property type="evidence" value="ECO:0000315"/>
    <property type="project" value="ZFIN"/>
</dbReference>
<dbReference type="GO" id="GO:0032259">
    <property type="term" value="P:methylation"/>
    <property type="evidence" value="ECO:0007669"/>
    <property type="project" value="UniProtKB-KW"/>
</dbReference>
<dbReference type="CDD" id="cd10536">
    <property type="entry name" value="SET_SMYD4"/>
    <property type="match status" value="1"/>
</dbReference>
<dbReference type="Gene3D" id="6.10.140.2220">
    <property type="match status" value="1"/>
</dbReference>
<dbReference type="Gene3D" id="2.170.270.10">
    <property type="entry name" value="SET domain"/>
    <property type="match status" value="1"/>
</dbReference>
<dbReference type="Gene3D" id="1.25.40.10">
    <property type="entry name" value="Tetratricopeptide repeat domain"/>
    <property type="match status" value="2"/>
</dbReference>
<dbReference type="InterPro" id="IPR052097">
    <property type="entry name" value="SET-MYND_domain_protein"/>
</dbReference>
<dbReference type="InterPro" id="IPR001214">
    <property type="entry name" value="SET_dom"/>
</dbReference>
<dbReference type="InterPro" id="IPR046341">
    <property type="entry name" value="SET_dom_sf"/>
</dbReference>
<dbReference type="InterPro" id="IPR044421">
    <property type="entry name" value="SMYD4_SET"/>
</dbReference>
<dbReference type="InterPro" id="IPR011990">
    <property type="entry name" value="TPR-like_helical_dom_sf"/>
</dbReference>
<dbReference type="InterPro" id="IPR002893">
    <property type="entry name" value="Znf_MYND"/>
</dbReference>
<dbReference type="PANTHER" id="PTHR46165">
    <property type="entry name" value="SET AND MYND DOMAIN-CONTAINING PROTEIN 4"/>
    <property type="match status" value="1"/>
</dbReference>
<dbReference type="PANTHER" id="PTHR46165:SF2">
    <property type="entry name" value="SET AND MYND DOMAIN-CONTAINING PROTEIN 4"/>
    <property type="match status" value="1"/>
</dbReference>
<dbReference type="Pfam" id="PF00856">
    <property type="entry name" value="SET"/>
    <property type="match status" value="1"/>
</dbReference>
<dbReference type="Pfam" id="PF01753">
    <property type="entry name" value="zf-MYND"/>
    <property type="match status" value="1"/>
</dbReference>
<dbReference type="SUPFAM" id="SSF144232">
    <property type="entry name" value="HIT/MYND zinc finger-like"/>
    <property type="match status" value="1"/>
</dbReference>
<dbReference type="SUPFAM" id="SSF82199">
    <property type="entry name" value="SET domain"/>
    <property type="match status" value="1"/>
</dbReference>
<dbReference type="SUPFAM" id="SSF48452">
    <property type="entry name" value="TPR-like"/>
    <property type="match status" value="1"/>
</dbReference>
<dbReference type="PROSITE" id="PS50280">
    <property type="entry name" value="SET"/>
    <property type="match status" value="1"/>
</dbReference>
<dbReference type="PROSITE" id="PS01360">
    <property type="entry name" value="ZF_MYND_1"/>
    <property type="match status" value="1"/>
</dbReference>
<dbReference type="PROSITE" id="PS50865">
    <property type="entry name" value="ZF_MYND_2"/>
    <property type="match status" value="1"/>
</dbReference>
<comment type="function">
    <text evidence="3 7">Protein-lysine N-methyltransferase. Monomethylates PRMT5, modulating its transcriptional activity (By similarity). May also act as a histone methyltransferase (PubMed:30110327). Plays a critical role in cardiac development. Acts as a key epigenetic regulator of gene expression during cardiac development via its dual activities as a methyltransferase and negative regulator of HDAC1 (PubMed:30110327).</text>
</comment>
<comment type="catalytic activity">
    <reaction evidence="3">
        <text>L-lysyl-[protein] + S-adenosyl-L-methionine = N(6)-methyl-L-lysyl-[protein] + S-adenosyl-L-homocysteine + H(+)</text>
        <dbReference type="Rhea" id="RHEA:51736"/>
        <dbReference type="Rhea" id="RHEA-COMP:9752"/>
        <dbReference type="Rhea" id="RHEA-COMP:13053"/>
        <dbReference type="ChEBI" id="CHEBI:15378"/>
        <dbReference type="ChEBI" id="CHEBI:29969"/>
        <dbReference type="ChEBI" id="CHEBI:57856"/>
        <dbReference type="ChEBI" id="CHEBI:59789"/>
        <dbReference type="ChEBI" id="CHEBI:61929"/>
    </reaction>
</comment>
<comment type="subcellular location">
    <subcellularLocation>
        <location evidence="2">Nucleus</location>
    </subcellularLocation>
    <subcellularLocation>
        <location evidence="2">Cytoplasm</location>
    </subcellularLocation>
</comment>
<comment type="developmental stage">
    <text evidence="7">Ubiquitously expressed in early embryos and becomes enriched in the developing heart at 48 hours post-fertilization.</text>
</comment>
<comment type="disruption phenotype">
    <text evidence="7">Mutants generated by CRISPR-Cas9-mediated gene editing exhibit severe cardiac malformations, including defects in left-right patterning and looping and hypoplastic ventricles.</text>
</comment>
<comment type="similarity">
    <text evidence="6">Belongs to the class V-like SAM-binding methyltransferase superfamily.</text>
</comment>
<keyword id="KW-0963">Cytoplasm</keyword>
<keyword id="KW-0479">Metal-binding</keyword>
<keyword id="KW-0489">Methyltransferase</keyword>
<keyword id="KW-0539">Nucleus</keyword>
<keyword id="KW-1185">Reference proteome</keyword>
<keyword id="KW-0949">S-adenosyl-L-methionine</keyword>
<keyword id="KW-0808">Transferase</keyword>
<keyword id="KW-0862">Zinc</keyword>
<keyword id="KW-0863">Zinc-finger</keyword>
<feature type="chain" id="PRO_0000453152" description="Protein-lysine N-methyltransferase SMYD4">
    <location>
        <begin position="1"/>
        <end position="753"/>
    </location>
</feature>
<feature type="domain" description="SET" evidence="6">
    <location>
        <begin position="186"/>
        <end position="528"/>
    </location>
</feature>
<feature type="zinc finger region" description="MYND-type" evidence="5">
    <location>
        <begin position="246"/>
        <end position="285"/>
    </location>
</feature>
<feature type="binding site" evidence="1">
    <location>
        <begin position="112"/>
        <end position="114"/>
    </location>
    <ligand>
        <name>S-adenosyl-L-methionine</name>
        <dbReference type="ChEBI" id="CHEBI:59789"/>
    </ligand>
</feature>
<feature type="binding site" evidence="5">
    <location>
        <position position="246"/>
    </location>
    <ligand>
        <name>Zn(2+)</name>
        <dbReference type="ChEBI" id="CHEBI:29105"/>
        <label>1</label>
    </ligand>
</feature>
<feature type="binding site" evidence="5">
    <location>
        <position position="249"/>
    </location>
    <ligand>
        <name>Zn(2+)</name>
        <dbReference type="ChEBI" id="CHEBI:29105"/>
        <label>1</label>
    </ligand>
</feature>
<feature type="binding site" evidence="5">
    <location>
        <position position="259"/>
    </location>
    <ligand>
        <name>Zn(2+)</name>
        <dbReference type="ChEBI" id="CHEBI:29105"/>
        <label>2</label>
    </ligand>
</feature>
<feature type="binding site" evidence="5">
    <location>
        <position position="262"/>
    </location>
    <ligand>
        <name>Zn(2+)</name>
        <dbReference type="ChEBI" id="CHEBI:29105"/>
        <label>2</label>
    </ligand>
</feature>
<feature type="binding site" evidence="5">
    <location>
        <position position="268"/>
    </location>
    <ligand>
        <name>Zn(2+)</name>
        <dbReference type="ChEBI" id="CHEBI:29105"/>
        <label>1</label>
    </ligand>
</feature>
<feature type="binding site" evidence="5">
    <location>
        <position position="272"/>
    </location>
    <ligand>
        <name>Zn(2+)</name>
        <dbReference type="ChEBI" id="CHEBI:29105"/>
        <label>1</label>
    </ligand>
</feature>
<feature type="binding site" evidence="5">
    <location>
        <position position="281"/>
    </location>
    <ligand>
        <name>Zn(2+)</name>
        <dbReference type="ChEBI" id="CHEBI:29105"/>
        <label>2</label>
    </ligand>
</feature>
<feature type="binding site" evidence="5">
    <location>
        <position position="285"/>
    </location>
    <ligand>
        <name>Zn(2+)</name>
        <dbReference type="ChEBI" id="CHEBI:29105"/>
        <label>2</label>
    </ligand>
</feature>
<feature type="binding site" evidence="4">
    <location>
        <begin position="467"/>
        <end position="468"/>
    </location>
    <ligand>
        <name>S-adenosyl-L-methionine</name>
        <dbReference type="ChEBI" id="CHEBI:59789"/>
    </ligand>
</feature>
<feature type="binding site" evidence="6">
    <location>
        <position position="527"/>
    </location>
    <ligand>
        <name>S-adenosyl-L-methionine</name>
        <dbReference type="ChEBI" id="CHEBI:59789"/>
    </ligand>
</feature>
<feature type="sequence conflict" description="In Ref. 3; ABI34489." evidence="8" ref="3">
    <original>H</original>
    <variation>C</variation>
    <location>
        <position position="587"/>
    </location>
</feature>
<evidence type="ECO:0000250" key="1"/>
<evidence type="ECO:0000250" key="2">
    <source>
        <dbReference type="UniProtKB" id="Q8BTK5"/>
    </source>
</evidence>
<evidence type="ECO:0000250" key="3">
    <source>
        <dbReference type="UniProtKB" id="Q8IYR2"/>
    </source>
</evidence>
<evidence type="ECO:0000250" key="4">
    <source>
        <dbReference type="UniProtKB" id="Q9H7B4"/>
    </source>
</evidence>
<evidence type="ECO:0000255" key="5">
    <source>
        <dbReference type="PROSITE-ProRule" id="PRU00134"/>
    </source>
</evidence>
<evidence type="ECO:0000255" key="6">
    <source>
        <dbReference type="PROSITE-ProRule" id="PRU00190"/>
    </source>
</evidence>
<evidence type="ECO:0000269" key="7">
    <source>
    </source>
</evidence>
<evidence type="ECO:0000305" key="8"/>
<organism>
    <name type="scientific">Danio rerio</name>
    <name type="common">Zebrafish</name>
    <name type="synonym">Brachydanio rerio</name>
    <dbReference type="NCBI Taxonomy" id="7955"/>
    <lineage>
        <taxon>Eukaryota</taxon>
        <taxon>Metazoa</taxon>
        <taxon>Chordata</taxon>
        <taxon>Craniata</taxon>
        <taxon>Vertebrata</taxon>
        <taxon>Euteleostomi</taxon>
        <taxon>Actinopterygii</taxon>
        <taxon>Neopterygii</taxon>
        <taxon>Teleostei</taxon>
        <taxon>Ostariophysi</taxon>
        <taxon>Cypriniformes</taxon>
        <taxon>Danionidae</taxon>
        <taxon>Danioninae</taxon>
        <taxon>Danio</taxon>
    </lineage>
</organism>
<reference key="1">
    <citation type="journal article" date="2013" name="Nature">
        <title>The zebrafish reference genome sequence and its relationship to the human genome.</title>
        <authorList>
            <person name="Howe K."/>
            <person name="Clark M.D."/>
            <person name="Torroja C.F."/>
            <person name="Torrance J."/>
            <person name="Berthelot C."/>
            <person name="Muffato M."/>
            <person name="Collins J.E."/>
            <person name="Humphray S."/>
            <person name="McLaren K."/>
            <person name="Matthews L."/>
            <person name="McLaren S."/>
            <person name="Sealy I."/>
            <person name="Caccamo M."/>
            <person name="Churcher C."/>
            <person name="Scott C."/>
            <person name="Barrett J.C."/>
            <person name="Koch R."/>
            <person name="Rauch G.J."/>
            <person name="White S."/>
            <person name="Chow W."/>
            <person name="Kilian B."/>
            <person name="Quintais L.T."/>
            <person name="Guerra-Assuncao J.A."/>
            <person name="Zhou Y."/>
            <person name="Gu Y."/>
            <person name="Yen J."/>
            <person name="Vogel J.H."/>
            <person name="Eyre T."/>
            <person name="Redmond S."/>
            <person name="Banerjee R."/>
            <person name="Chi J."/>
            <person name="Fu B."/>
            <person name="Langley E."/>
            <person name="Maguire S.F."/>
            <person name="Laird G.K."/>
            <person name="Lloyd D."/>
            <person name="Kenyon E."/>
            <person name="Donaldson S."/>
            <person name="Sehra H."/>
            <person name="Almeida-King J."/>
            <person name="Loveland J."/>
            <person name="Trevanion S."/>
            <person name="Jones M."/>
            <person name="Quail M."/>
            <person name="Willey D."/>
            <person name="Hunt A."/>
            <person name="Burton J."/>
            <person name="Sims S."/>
            <person name="McLay K."/>
            <person name="Plumb B."/>
            <person name="Davis J."/>
            <person name="Clee C."/>
            <person name="Oliver K."/>
            <person name="Clark R."/>
            <person name="Riddle C."/>
            <person name="Elliot D."/>
            <person name="Threadgold G."/>
            <person name="Harden G."/>
            <person name="Ware D."/>
            <person name="Begum S."/>
            <person name="Mortimore B."/>
            <person name="Kerry G."/>
            <person name="Heath P."/>
            <person name="Phillimore B."/>
            <person name="Tracey A."/>
            <person name="Corby N."/>
            <person name="Dunn M."/>
            <person name="Johnson C."/>
            <person name="Wood J."/>
            <person name="Clark S."/>
            <person name="Pelan S."/>
            <person name="Griffiths G."/>
            <person name="Smith M."/>
            <person name="Glithero R."/>
            <person name="Howden P."/>
            <person name="Barker N."/>
            <person name="Lloyd C."/>
            <person name="Stevens C."/>
            <person name="Harley J."/>
            <person name="Holt K."/>
            <person name="Panagiotidis G."/>
            <person name="Lovell J."/>
            <person name="Beasley H."/>
            <person name="Henderson C."/>
            <person name="Gordon D."/>
            <person name="Auger K."/>
            <person name="Wright D."/>
            <person name="Collins J."/>
            <person name="Raisen C."/>
            <person name="Dyer L."/>
            <person name="Leung K."/>
            <person name="Robertson L."/>
            <person name="Ambridge K."/>
            <person name="Leongamornlert D."/>
            <person name="McGuire S."/>
            <person name="Gilderthorp R."/>
            <person name="Griffiths C."/>
            <person name="Manthravadi D."/>
            <person name="Nichol S."/>
            <person name="Barker G."/>
            <person name="Whitehead S."/>
            <person name="Kay M."/>
            <person name="Brown J."/>
            <person name="Murnane C."/>
            <person name="Gray E."/>
            <person name="Humphries M."/>
            <person name="Sycamore N."/>
            <person name="Barker D."/>
            <person name="Saunders D."/>
            <person name="Wallis J."/>
            <person name="Babbage A."/>
            <person name="Hammond S."/>
            <person name="Mashreghi-Mohammadi M."/>
            <person name="Barr L."/>
            <person name="Martin S."/>
            <person name="Wray P."/>
            <person name="Ellington A."/>
            <person name="Matthews N."/>
            <person name="Ellwood M."/>
            <person name="Woodmansey R."/>
            <person name="Clark G."/>
            <person name="Cooper J."/>
            <person name="Tromans A."/>
            <person name="Grafham D."/>
            <person name="Skuce C."/>
            <person name="Pandian R."/>
            <person name="Andrews R."/>
            <person name="Harrison E."/>
            <person name="Kimberley A."/>
            <person name="Garnett J."/>
            <person name="Fosker N."/>
            <person name="Hall R."/>
            <person name="Garner P."/>
            <person name="Kelly D."/>
            <person name="Bird C."/>
            <person name="Palmer S."/>
            <person name="Gehring I."/>
            <person name="Berger A."/>
            <person name="Dooley C.M."/>
            <person name="Ersan-Urun Z."/>
            <person name="Eser C."/>
            <person name="Geiger H."/>
            <person name="Geisler M."/>
            <person name="Karotki L."/>
            <person name="Kirn A."/>
            <person name="Konantz J."/>
            <person name="Konantz M."/>
            <person name="Oberlander M."/>
            <person name="Rudolph-Geiger S."/>
            <person name="Teucke M."/>
            <person name="Lanz C."/>
            <person name="Raddatz G."/>
            <person name="Osoegawa K."/>
            <person name="Zhu B."/>
            <person name="Rapp A."/>
            <person name="Widaa S."/>
            <person name="Langford C."/>
            <person name="Yang F."/>
            <person name="Schuster S.C."/>
            <person name="Carter N.P."/>
            <person name="Harrow J."/>
            <person name="Ning Z."/>
            <person name="Herrero J."/>
            <person name="Searle S.M."/>
            <person name="Enright A."/>
            <person name="Geisler R."/>
            <person name="Plasterk R.H."/>
            <person name="Lee C."/>
            <person name="Westerfield M."/>
            <person name="de Jong P.J."/>
            <person name="Zon L.I."/>
            <person name="Postlethwait J.H."/>
            <person name="Nusslein-Volhard C."/>
            <person name="Hubbard T.J."/>
            <person name="Roest Crollius H."/>
            <person name="Rogers J."/>
            <person name="Stemple D.L."/>
        </authorList>
    </citation>
    <scope>NUCLEOTIDE SEQUENCE [LARGE SCALE GENOMIC DNA]</scope>
    <source>
        <strain>Tuebingen</strain>
    </source>
</reference>
<reference key="2">
    <citation type="submission" date="2006-09" db="EMBL/GenBank/DDBJ databases">
        <authorList>
            <consortium name="NIH - Zebrafish Gene Collection (ZGC) project"/>
        </authorList>
    </citation>
    <scope>NUCLEOTIDE SEQUENCE [LARGE SCALE MRNA]</scope>
    <source>
        <tissue>Ovary</tissue>
    </source>
</reference>
<reference key="3">
    <citation type="journal article" date="2008" name="PLoS ONE">
        <title>Genome-wide survey and developmental expression mapping of zebrafish SET domain-containing genes.</title>
        <authorList>
            <person name="Sun X.-J."/>
            <person name="Xu P.-F."/>
            <person name="Zhou T."/>
            <person name="Hu M."/>
            <person name="Fu C.-T."/>
            <person name="Zhang Y."/>
            <person name="Jin Y."/>
            <person name="Chen Y."/>
            <person name="Chen S.-J."/>
            <person name="Huang Q.-H."/>
            <person name="Liu T.X."/>
            <person name="Chen Z."/>
        </authorList>
    </citation>
    <scope>NUCLEOTIDE SEQUENCE [MRNA] OF 575-753</scope>
</reference>
<reference key="4">
    <citation type="journal article" date="2018" name="PLoS Genet.">
        <title>The roles of SMYD4 in epigenetic regulation of cardiac development in zebrafish.</title>
        <authorList>
            <person name="Xiao D."/>
            <person name="Wang H."/>
            <person name="Hao L."/>
            <person name="Guo X."/>
            <person name="Ma X."/>
            <person name="Qian Y."/>
            <person name="Chen H."/>
            <person name="Ma J."/>
            <person name="Zhang J."/>
            <person name="Sheng W."/>
            <person name="Shou W."/>
            <person name="Huang G."/>
            <person name="Ma D."/>
        </authorList>
    </citation>
    <scope>FUNCTION</scope>
    <scope>DISRUPTION PHENOTYPE</scope>
    <scope>DEVELOPMENTAL STAGE</scope>
</reference>